<organism>
    <name type="scientific">Bacillus subtilis (strain 168)</name>
    <dbReference type="NCBI Taxonomy" id="224308"/>
    <lineage>
        <taxon>Bacteria</taxon>
        <taxon>Bacillati</taxon>
        <taxon>Bacillota</taxon>
        <taxon>Bacilli</taxon>
        <taxon>Bacillales</taxon>
        <taxon>Bacillaceae</taxon>
        <taxon>Bacillus</taxon>
    </lineage>
</organism>
<keyword id="KW-0002">3D-structure</keyword>
<keyword id="KW-0012">Acyltransferase</keyword>
<keyword id="KW-1185">Reference proteome</keyword>
<keyword id="KW-0808">Transferase</keyword>
<proteinExistence type="evidence at protein level"/>
<name>YYCN_BACSU</name>
<sequence>MTIMLTPMQTEEFRSYLTYTTKHYAEEKVKAGTWLPEDAQLLSKQVFTDLLPRGLETPHHHLWSLKLNEKDIVGWLWIHAEPEHPQQEAFIYDFGLYEPYRGKGYAKQALAALDQAARSMGIRKLSLHVFAHNQTARKLYEQTGFQETDVVMSKKL</sequence>
<reference key="1">
    <citation type="journal article" date="1997" name="DNA Res.">
        <title>Sequence analysis of the 36-kb region between gntZ and trnY genes of Bacillus subtilis genome.</title>
        <authorList>
            <person name="Kasahara Y."/>
            <person name="Nakai S."/>
            <person name="Ogasawara N."/>
        </authorList>
    </citation>
    <scope>NUCLEOTIDE SEQUENCE [GENOMIC DNA]</scope>
    <source>
        <strain>168</strain>
    </source>
</reference>
<reference key="2">
    <citation type="journal article" date="1997" name="Nature">
        <title>The complete genome sequence of the Gram-positive bacterium Bacillus subtilis.</title>
        <authorList>
            <person name="Kunst F."/>
            <person name="Ogasawara N."/>
            <person name="Moszer I."/>
            <person name="Albertini A.M."/>
            <person name="Alloni G."/>
            <person name="Azevedo V."/>
            <person name="Bertero M.G."/>
            <person name="Bessieres P."/>
            <person name="Bolotin A."/>
            <person name="Borchert S."/>
            <person name="Borriss R."/>
            <person name="Boursier L."/>
            <person name="Brans A."/>
            <person name="Braun M."/>
            <person name="Brignell S.C."/>
            <person name="Bron S."/>
            <person name="Brouillet S."/>
            <person name="Bruschi C.V."/>
            <person name="Caldwell B."/>
            <person name="Capuano V."/>
            <person name="Carter N.M."/>
            <person name="Choi S.-K."/>
            <person name="Codani J.-J."/>
            <person name="Connerton I.F."/>
            <person name="Cummings N.J."/>
            <person name="Daniel R.A."/>
            <person name="Denizot F."/>
            <person name="Devine K.M."/>
            <person name="Duesterhoeft A."/>
            <person name="Ehrlich S.D."/>
            <person name="Emmerson P.T."/>
            <person name="Entian K.-D."/>
            <person name="Errington J."/>
            <person name="Fabret C."/>
            <person name="Ferrari E."/>
            <person name="Foulger D."/>
            <person name="Fritz C."/>
            <person name="Fujita M."/>
            <person name="Fujita Y."/>
            <person name="Fuma S."/>
            <person name="Galizzi A."/>
            <person name="Galleron N."/>
            <person name="Ghim S.-Y."/>
            <person name="Glaser P."/>
            <person name="Goffeau A."/>
            <person name="Golightly E.J."/>
            <person name="Grandi G."/>
            <person name="Guiseppi G."/>
            <person name="Guy B.J."/>
            <person name="Haga K."/>
            <person name="Haiech J."/>
            <person name="Harwood C.R."/>
            <person name="Henaut A."/>
            <person name="Hilbert H."/>
            <person name="Holsappel S."/>
            <person name="Hosono S."/>
            <person name="Hullo M.-F."/>
            <person name="Itaya M."/>
            <person name="Jones L.-M."/>
            <person name="Joris B."/>
            <person name="Karamata D."/>
            <person name="Kasahara Y."/>
            <person name="Klaerr-Blanchard M."/>
            <person name="Klein C."/>
            <person name="Kobayashi Y."/>
            <person name="Koetter P."/>
            <person name="Koningstein G."/>
            <person name="Krogh S."/>
            <person name="Kumano M."/>
            <person name="Kurita K."/>
            <person name="Lapidus A."/>
            <person name="Lardinois S."/>
            <person name="Lauber J."/>
            <person name="Lazarevic V."/>
            <person name="Lee S.-M."/>
            <person name="Levine A."/>
            <person name="Liu H."/>
            <person name="Masuda S."/>
            <person name="Mauel C."/>
            <person name="Medigue C."/>
            <person name="Medina N."/>
            <person name="Mellado R.P."/>
            <person name="Mizuno M."/>
            <person name="Moestl D."/>
            <person name="Nakai S."/>
            <person name="Noback M."/>
            <person name="Noone D."/>
            <person name="O'Reilly M."/>
            <person name="Ogawa K."/>
            <person name="Ogiwara A."/>
            <person name="Oudega B."/>
            <person name="Park S.-H."/>
            <person name="Parro V."/>
            <person name="Pohl T.M."/>
            <person name="Portetelle D."/>
            <person name="Porwollik S."/>
            <person name="Prescott A.M."/>
            <person name="Presecan E."/>
            <person name="Pujic P."/>
            <person name="Purnelle B."/>
            <person name="Rapoport G."/>
            <person name="Rey M."/>
            <person name="Reynolds S."/>
            <person name="Rieger M."/>
            <person name="Rivolta C."/>
            <person name="Rocha E."/>
            <person name="Roche B."/>
            <person name="Rose M."/>
            <person name="Sadaie Y."/>
            <person name="Sato T."/>
            <person name="Scanlan E."/>
            <person name="Schleich S."/>
            <person name="Schroeter R."/>
            <person name="Scoffone F."/>
            <person name="Sekiguchi J."/>
            <person name="Sekowska A."/>
            <person name="Seror S.J."/>
            <person name="Serror P."/>
            <person name="Shin B.-S."/>
            <person name="Soldo B."/>
            <person name="Sorokin A."/>
            <person name="Tacconi E."/>
            <person name="Takagi T."/>
            <person name="Takahashi H."/>
            <person name="Takemaru K."/>
            <person name="Takeuchi M."/>
            <person name="Tamakoshi A."/>
            <person name="Tanaka T."/>
            <person name="Terpstra P."/>
            <person name="Tognoni A."/>
            <person name="Tosato V."/>
            <person name="Uchiyama S."/>
            <person name="Vandenbol M."/>
            <person name="Vannier F."/>
            <person name="Vassarotti A."/>
            <person name="Viari A."/>
            <person name="Wambutt R."/>
            <person name="Wedler E."/>
            <person name="Wedler H."/>
            <person name="Weitzenegger T."/>
            <person name="Winters P."/>
            <person name="Wipat A."/>
            <person name="Yamamoto H."/>
            <person name="Yamane K."/>
            <person name="Yasumoto K."/>
            <person name="Yata K."/>
            <person name="Yoshida K."/>
            <person name="Yoshikawa H.-F."/>
            <person name="Zumstein E."/>
            <person name="Yoshikawa H."/>
            <person name="Danchin A."/>
        </authorList>
    </citation>
    <scope>NUCLEOTIDE SEQUENCE [LARGE SCALE GENOMIC DNA]</scope>
    <source>
        <strain>168</strain>
    </source>
</reference>
<reference key="3">
    <citation type="journal article" date="2003" name="Proteins">
        <title>Structure of the Bacillus subtilis yycN protein: a putative N-acetyltransferase.</title>
        <authorList>
            <person name="Taneja B."/>
            <person name="Maar S."/>
            <person name="Shuvalova L."/>
            <person name="Collart F."/>
            <person name="Anderson W."/>
            <person name="Mondragon A."/>
        </authorList>
    </citation>
    <scope>X-RAY CRYSTALLOGRAPHY (2.2 ANGSTROMS)</scope>
    <scope>SUBUNIT</scope>
</reference>
<reference key="4">
    <citation type="submission" date="2005-01" db="PDB data bank">
        <title>Crystal structure of putative acetyltransferase (yycN) from Bacillus subtilis.</title>
        <authorList>
            <consortium name="Northeast structural genomics consortium (NESG)"/>
        </authorList>
    </citation>
    <scope>X-RAY CRYSTALLOGRAPHY (2.2 ANGSTROMS)</scope>
</reference>
<protein>
    <recommendedName>
        <fullName>Uncharacterized N-acetyltransferase YycN</fullName>
        <ecNumber>2.3.1.-</ecNumber>
    </recommendedName>
</protein>
<gene>
    <name type="primary">yycN</name>
    <name type="ordered locus">BSU40290</name>
</gene>
<accession>O32293</accession>
<accession>Q45608</accession>
<dbReference type="EC" id="2.3.1.-"/>
<dbReference type="EMBL" id="D78193">
    <property type="protein sequence ID" value="BAA11288.1"/>
    <property type="status" value="ALT_FRAME"/>
    <property type="molecule type" value="Genomic_DNA"/>
</dbReference>
<dbReference type="EMBL" id="AL009126">
    <property type="protein sequence ID" value="CAB16066.1"/>
    <property type="molecule type" value="Genomic_DNA"/>
</dbReference>
<dbReference type="PIR" id="B70090">
    <property type="entry name" value="B70090"/>
</dbReference>
<dbReference type="RefSeq" id="NP_391909.1">
    <property type="nucleotide sequence ID" value="NC_000964.3"/>
</dbReference>
<dbReference type="RefSeq" id="WP_003243975.1">
    <property type="nucleotide sequence ID" value="NZ_OZ025638.1"/>
</dbReference>
<dbReference type="PDB" id="1ON0">
    <property type="method" value="X-ray"/>
    <property type="resolution" value="2.20 A"/>
    <property type="chains" value="A/B/C/D=1-156"/>
</dbReference>
<dbReference type="PDB" id="1UFH">
    <property type="method" value="X-ray"/>
    <property type="resolution" value="2.20 A"/>
    <property type="chains" value="A/B=1-156"/>
</dbReference>
<dbReference type="PDBsum" id="1ON0"/>
<dbReference type="PDBsum" id="1UFH"/>
<dbReference type="SMR" id="O32293"/>
<dbReference type="FunCoup" id="O32293">
    <property type="interactions" value="8"/>
</dbReference>
<dbReference type="STRING" id="224308.BSU40290"/>
<dbReference type="PaxDb" id="224308-BSU40290"/>
<dbReference type="EnsemblBacteria" id="CAB16066">
    <property type="protein sequence ID" value="CAB16066"/>
    <property type="gene ID" value="BSU_40290"/>
</dbReference>
<dbReference type="GeneID" id="937725"/>
<dbReference type="KEGG" id="bsu:BSU40290"/>
<dbReference type="PATRIC" id="fig|224308.179.peg.4359"/>
<dbReference type="eggNOG" id="COG0456">
    <property type="taxonomic scope" value="Bacteria"/>
</dbReference>
<dbReference type="InParanoid" id="O32293"/>
<dbReference type="OrthoDB" id="65897at2"/>
<dbReference type="PhylomeDB" id="O32293"/>
<dbReference type="BioCyc" id="BSUB:BSU40290-MONOMER"/>
<dbReference type="EvolutionaryTrace" id="O32293"/>
<dbReference type="Proteomes" id="UP000001570">
    <property type="component" value="Chromosome"/>
</dbReference>
<dbReference type="GO" id="GO:0016747">
    <property type="term" value="F:acyltransferase activity, transferring groups other than amino-acyl groups"/>
    <property type="evidence" value="ECO:0007669"/>
    <property type="project" value="InterPro"/>
</dbReference>
<dbReference type="CDD" id="cd04301">
    <property type="entry name" value="NAT_SF"/>
    <property type="match status" value="1"/>
</dbReference>
<dbReference type="Gene3D" id="3.40.630.30">
    <property type="match status" value="1"/>
</dbReference>
<dbReference type="InterPro" id="IPR016181">
    <property type="entry name" value="Acyl_CoA_acyltransferase"/>
</dbReference>
<dbReference type="InterPro" id="IPR000182">
    <property type="entry name" value="GNAT_dom"/>
</dbReference>
<dbReference type="InterPro" id="IPR052829">
    <property type="entry name" value="N-acetyltransferase_domain"/>
</dbReference>
<dbReference type="PANTHER" id="PTHR43259:SF1">
    <property type="entry name" value="N-ACETYLTRANSFERASE DOMAIN-CONTAINING PROTEIN"/>
    <property type="match status" value="1"/>
</dbReference>
<dbReference type="PANTHER" id="PTHR43259">
    <property type="entry name" value="SPT10P"/>
    <property type="match status" value="1"/>
</dbReference>
<dbReference type="Pfam" id="PF00583">
    <property type="entry name" value="Acetyltransf_1"/>
    <property type="match status" value="1"/>
</dbReference>
<dbReference type="SUPFAM" id="SSF55729">
    <property type="entry name" value="Acyl-CoA N-acyltransferases (Nat)"/>
    <property type="match status" value="1"/>
</dbReference>
<dbReference type="PROSITE" id="PS51186">
    <property type="entry name" value="GNAT"/>
    <property type="match status" value="1"/>
</dbReference>
<evidence type="ECO:0000255" key="1">
    <source>
        <dbReference type="PROSITE-ProRule" id="PRU00532"/>
    </source>
</evidence>
<evidence type="ECO:0000269" key="2">
    <source>
    </source>
</evidence>
<evidence type="ECO:0000305" key="3"/>
<evidence type="ECO:0007829" key="4">
    <source>
        <dbReference type="PDB" id="1ON0"/>
    </source>
</evidence>
<comment type="subunit">
    <text evidence="2">Homodimer.</text>
</comment>
<comment type="similarity">
    <text evidence="3">Belongs to the acetyltransferase family.</text>
</comment>
<comment type="sequence caution" evidence="3">
    <conflict type="frameshift">
        <sequence resource="EMBL-CDS" id="BAA11288"/>
    </conflict>
</comment>
<feature type="chain" id="PRO_0000359969" description="Uncharacterized N-acetyltransferase YycN">
    <location>
        <begin position="1"/>
        <end position="156"/>
    </location>
</feature>
<feature type="domain" description="N-acetyltransferase" evidence="1">
    <location>
        <begin position="11"/>
        <end position="156"/>
    </location>
</feature>
<feature type="strand" evidence="4">
    <location>
        <begin position="4"/>
        <end position="7"/>
    </location>
</feature>
<feature type="helix" evidence="4">
    <location>
        <begin position="10"/>
        <end position="30"/>
    </location>
</feature>
<feature type="helix" evidence="4">
    <location>
        <begin position="36"/>
        <end position="50"/>
    </location>
</feature>
<feature type="helix" evidence="4">
    <location>
        <begin position="54"/>
        <end position="56"/>
    </location>
</feature>
<feature type="strand" evidence="4">
    <location>
        <begin position="60"/>
        <end position="70"/>
    </location>
</feature>
<feature type="strand" evidence="4">
    <location>
        <begin position="72"/>
        <end position="80"/>
    </location>
</feature>
<feature type="strand" evidence="4">
    <location>
        <begin position="88"/>
        <end position="96"/>
    </location>
</feature>
<feature type="helix" evidence="4">
    <location>
        <begin position="98"/>
        <end position="100"/>
    </location>
</feature>
<feature type="strand" evidence="4">
    <location>
        <begin position="102"/>
        <end position="104"/>
    </location>
</feature>
<feature type="helix" evidence="4">
    <location>
        <begin position="105"/>
        <end position="119"/>
    </location>
</feature>
<feature type="strand" evidence="4">
    <location>
        <begin position="124"/>
        <end position="127"/>
    </location>
</feature>
<feature type="helix" evidence="4">
    <location>
        <begin position="134"/>
        <end position="142"/>
    </location>
</feature>